<evidence type="ECO:0000250" key="1"/>
<evidence type="ECO:0000255" key="2">
    <source>
        <dbReference type="PROSITE-ProRule" id="PRU10092"/>
    </source>
</evidence>
<evidence type="ECO:0000255" key="3">
    <source>
        <dbReference type="PROSITE-ProRule" id="PRU10093"/>
    </source>
</evidence>
<evidence type="ECO:0000256" key="4">
    <source>
        <dbReference type="SAM" id="MobiDB-lite"/>
    </source>
</evidence>
<evidence type="ECO:0000305" key="5"/>
<proteinExistence type="evidence at transcript level"/>
<protein>
    <recommendedName>
        <fullName>Ubiquitin carboxyl-terminal hydrolase 14</fullName>
        <ecNumber>3.4.19.12</ecNumber>
    </recommendedName>
    <alternativeName>
        <fullName>Deubiquitinating enzyme 14</fullName>
    </alternativeName>
    <alternativeName>
        <fullName>Ubiquitin thioesterase 14</fullName>
    </alternativeName>
    <alternativeName>
        <fullName>Ubiquitin-specific-processing protease 14</fullName>
    </alternativeName>
</protein>
<comment type="function">
    <text evidence="1">Proteasome-associated deubiquitinase which releases ubiquitin from the proteasome targeted ubiquitinated proteins. Ensures the regeneration of ubiquitin at the proteasome (By similarity).</text>
</comment>
<comment type="catalytic activity">
    <reaction>
        <text>Thiol-dependent hydrolysis of ester, thioester, amide, peptide and isopeptide bonds formed by the C-terminal Gly of ubiquitin (a 76-residue protein attached to proteins as an intracellular targeting signal).</text>
        <dbReference type="EC" id="3.4.19.12"/>
    </reaction>
</comment>
<comment type="similarity">
    <text evidence="5">Belongs to the peptidase C19 family. USP14/UBP6 subfamily.</text>
</comment>
<comment type="caution">
    <text evidence="5">Was originally (Ref.1) thought to be a queuine tRNA-ribosyltransferase.</text>
</comment>
<feature type="chain" id="PRO_0000080640" description="Ubiquitin carboxyl-terminal hydrolase 14">
    <location>
        <begin position="1"/>
        <end position="489"/>
    </location>
</feature>
<feature type="domain" description="USP">
    <location>
        <begin position="102"/>
        <end position="458"/>
    </location>
</feature>
<feature type="region of interest" description="Disordered" evidence="4">
    <location>
        <begin position="467"/>
        <end position="489"/>
    </location>
</feature>
<feature type="active site" description="Nucleophile" evidence="2 3">
    <location>
        <position position="111"/>
    </location>
</feature>
<feature type="active site" description="Proton acceptor" evidence="2 3">
    <location>
        <position position="409"/>
    </location>
</feature>
<feature type="sequence conflict" description="In Ref. 1; AAA74956." evidence="5" ref="1">
    <original>I</original>
    <variation>M</variation>
    <location>
        <position position="398"/>
    </location>
</feature>
<sequence>MPIVNVKWQKEKYVVEVDTSAPPMVFKAQLFALTQVVPERQKVVIMGRTLGDDDWEGITIKENMTIMMMGSVGEIPKPPTVLEKKQANRDKQAEEISALYPCGLANLGNTCYFNSCVQMLKEVNELVLKPAEEMRIREHNDRLCHNLATLFNSLRDKDRALRSKGEPIKPFAAILTLSDSFPQFEKFKQQDANECLVSIMSNVTRIYGLSGWNIESLFRIQTETTMKCLESDEVSEKKVERNNQLTCYVNQDVRFLQTGIKAGFEEEMTRNSEELNRDAKWQKNTQISRLPKYLTVNINRFFYKESTKTNAKILKSVQFPMQLDTYDLCSQELKDKLVARRADIKLEEDAKLERELRKKVLDKEQGDKIFDDGVALPTAFEDDAGSNNSGFYDLKGIITHKGRSSQDGHYVAWMRSSEDGKWRLFDDEHVTVVDEEAILKTSGGGDWHSAYVLLYEARVIKQFPELPPAPVPTEVAADTAEPMEVSEKQ</sequence>
<keyword id="KW-0378">Hydrolase</keyword>
<keyword id="KW-0645">Protease</keyword>
<keyword id="KW-0647">Proteasome</keyword>
<keyword id="KW-1185">Reference proteome</keyword>
<keyword id="KW-0788">Thiol protease</keyword>
<keyword id="KW-0833">Ubl conjugation pathway</keyword>
<name>UBP14_CAEEL</name>
<reference key="1">
    <citation type="submission" date="1995-08" db="EMBL/GenBank/DDBJ databases">
        <authorList>
            <person name="Deshpande K.L."/>
            <person name="Katze J.R."/>
        </authorList>
    </citation>
    <scope>NUCLEOTIDE SEQUENCE [MRNA]</scope>
    <source>
        <strain>Bristol N2</strain>
    </source>
</reference>
<reference key="2">
    <citation type="journal article" date="1998" name="Science">
        <title>Genome sequence of the nematode C. elegans: a platform for investigating biology.</title>
        <authorList>
            <consortium name="The C. elegans sequencing consortium"/>
        </authorList>
    </citation>
    <scope>NUCLEOTIDE SEQUENCE [LARGE SCALE GENOMIC DNA]</scope>
    <source>
        <strain>Bristol N2</strain>
    </source>
</reference>
<accession>Q17361</accession>
<accession>O45248</accession>
<dbReference type="EC" id="3.4.19.12"/>
<dbReference type="EMBL" id="U32223">
    <property type="protein sequence ID" value="AAA74956.1"/>
    <property type="molecule type" value="mRNA"/>
</dbReference>
<dbReference type="EMBL" id="Z81468">
    <property type="protein sequence ID" value="CAB03876.1"/>
    <property type="molecule type" value="Genomic_DNA"/>
</dbReference>
<dbReference type="EMBL" id="Z83236">
    <property type="protein sequence ID" value="CAB03876.1"/>
    <property type="status" value="JOINED"/>
    <property type="molecule type" value="Genomic_DNA"/>
</dbReference>
<dbReference type="PIR" id="T19227">
    <property type="entry name" value="T19227"/>
</dbReference>
<dbReference type="RefSeq" id="NP_497006.1">
    <property type="nucleotide sequence ID" value="NM_064605.11"/>
</dbReference>
<dbReference type="SMR" id="Q17361"/>
<dbReference type="BioGRID" id="40386">
    <property type="interactions" value="22"/>
</dbReference>
<dbReference type="FunCoup" id="Q17361">
    <property type="interactions" value="3568"/>
</dbReference>
<dbReference type="STRING" id="6239.C13B4.2.1"/>
<dbReference type="MEROPS" id="C19.A36"/>
<dbReference type="PaxDb" id="6239-C13B4.2"/>
<dbReference type="PeptideAtlas" id="Q17361"/>
<dbReference type="EnsemblMetazoa" id="C13B4.2.1">
    <property type="protein sequence ID" value="C13B4.2.1"/>
    <property type="gene ID" value="WBGene00006856"/>
</dbReference>
<dbReference type="GeneID" id="175105"/>
<dbReference type="KEGG" id="cel:CELE_C13B4.2"/>
<dbReference type="UCSC" id="C13B4.2.1">
    <property type="organism name" value="c. elegans"/>
</dbReference>
<dbReference type="AGR" id="WB:WBGene00006856"/>
<dbReference type="CTD" id="175105"/>
<dbReference type="WormBase" id="C13B4.2">
    <property type="protein sequence ID" value="CE15615"/>
    <property type="gene ID" value="WBGene00006856"/>
    <property type="gene designation" value="usp-14"/>
</dbReference>
<dbReference type="eggNOG" id="KOG1872">
    <property type="taxonomic scope" value="Eukaryota"/>
</dbReference>
<dbReference type="GeneTree" id="ENSGT00390000009615"/>
<dbReference type="HOGENOM" id="CLU_017549_2_1_1"/>
<dbReference type="InParanoid" id="Q17361"/>
<dbReference type="OMA" id="FKSDAEY"/>
<dbReference type="OrthoDB" id="333239at2759"/>
<dbReference type="PhylomeDB" id="Q17361"/>
<dbReference type="Reactome" id="R-CEL-5689880">
    <property type="pathway name" value="Ub-specific processing proteases"/>
</dbReference>
<dbReference type="PRO" id="PR:Q17361"/>
<dbReference type="Proteomes" id="UP000001940">
    <property type="component" value="Chromosome II"/>
</dbReference>
<dbReference type="Bgee" id="WBGene00006856">
    <property type="expression patterns" value="Expressed in germ line (C elegans) and 4 other cell types or tissues"/>
</dbReference>
<dbReference type="GO" id="GO:0000502">
    <property type="term" value="C:proteasome complex"/>
    <property type="evidence" value="ECO:0007669"/>
    <property type="project" value="UniProtKB-KW"/>
</dbReference>
<dbReference type="GO" id="GO:0004843">
    <property type="term" value="F:cysteine-type deubiquitinase activity"/>
    <property type="evidence" value="ECO:0000318"/>
    <property type="project" value="GO_Central"/>
</dbReference>
<dbReference type="GO" id="GO:0070628">
    <property type="term" value="F:proteasome binding"/>
    <property type="evidence" value="ECO:0000318"/>
    <property type="project" value="GO_Central"/>
</dbReference>
<dbReference type="GO" id="GO:1904293">
    <property type="term" value="P:negative regulation of ERAD pathway"/>
    <property type="evidence" value="ECO:0000318"/>
    <property type="project" value="GO_Central"/>
</dbReference>
<dbReference type="GO" id="GO:0043161">
    <property type="term" value="P:proteasome-mediated ubiquitin-dependent protein catabolic process"/>
    <property type="evidence" value="ECO:0007669"/>
    <property type="project" value="InterPro"/>
</dbReference>
<dbReference type="GO" id="GO:0016579">
    <property type="term" value="P:protein deubiquitination"/>
    <property type="evidence" value="ECO:0007669"/>
    <property type="project" value="InterPro"/>
</dbReference>
<dbReference type="CDD" id="cd02657">
    <property type="entry name" value="Peptidase_C19A"/>
    <property type="match status" value="1"/>
</dbReference>
<dbReference type="CDD" id="cd16104">
    <property type="entry name" value="Ubl_USP14_like"/>
    <property type="match status" value="1"/>
</dbReference>
<dbReference type="Gene3D" id="3.90.70.10">
    <property type="entry name" value="Cysteine proteinases"/>
    <property type="match status" value="1"/>
</dbReference>
<dbReference type="Gene3D" id="3.10.20.90">
    <property type="entry name" value="Phosphatidylinositol 3-kinase Catalytic Subunit, Chain A, domain 1"/>
    <property type="match status" value="1"/>
</dbReference>
<dbReference type="InterPro" id="IPR038765">
    <property type="entry name" value="Papain-like_cys_pep_sf"/>
</dbReference>
<dbReference type="InterPro" id="IPR001394">
    <property type="entry name" value="Peptidase_C19_UCH"/>
</dbReference>
<dbReference type="InterPro" id="IPR000626">
    <property type="entry name" value="Ubiquitin-like_dom"/>
</dbReference>
<dbReference type="InterPro" id="IPR029071">
    <property type="entry name" value="Ubiquitin-like_domsf"/>
</dbReference>
<dbReference type="InterPro" id="IPR044635">
    <property type="entry name" value="UBP14-like"/>
</dbReference>
<dbReference type="InterPro" id="IPR018200">
    <property type="entry name" value="USP_CS"/>
</dbReference>
<dbReference type="InterPro" id="IPR028889">
    <property type="entry name" value="USP_dom"/>
</dbReference>
<dbReference type="PANTHER" id="PTHR43982">
    <property type="entry name" value="UBIQUITIN CARBOXYL-TERMINAL HYDROLASE"/>
    <property type="match status" value="1"/>
</dbReference>
<dbReference type="PANTHER" id="PTHR43982:SF1">
    <property type="entry name" value="UBIQUITIN CARBOXYL-TERMINAL HYDROLASE 14"/>
    <property type="match status" value="1"/>
</dbReference>
<dbReference type="Pfam" id="PF00443">
    <property type="entry name" value="UCH"/>
    <property type="match status" value="1"/>
</dbReference>
<dbReference type="SMART" id="SM00213">
    <property type="entry name" value="UBQ"/>
    <property type="match status" value="1"/>
</dbReference>
<dbReference type="SUPFAM" id="SSF54001">
    <property type="entry name" value="Cysteine proteinases"/>
    <property type="match status" value="1"/>
</dbReference>
<dbReference type="SUPFAM" id="SSF54236">
    <property type="entry name" value="Ubiquitin-like"/>
    <property type="match status" value="1"/>
</dbReference>
<dbReference type="PROSITE" id="PS00972">
    <property type="entry name" value="USP_1"/>
    <property type="match status" value="1"/>
</dbReference>
<dbReference type="PROSITE" id="PS00973">
    <property type="entry name" value="USP_2"/>
    <property type="match status" value="1"/>
</dbReference>
<dbReference type="PROSITE" id="PS50235">
    <property type="entry name" value="USP_3"/>
    <property type="match status" value="1"/>
</dbReference>
<gene>
    <name type="primary">usp-14</name>
    <name type="synonym">tgt-1</name>
    <name type="ORF">C13B4.2</name>
</gene>
<organism>
    <name type="scientific">Caenorhabditis elegans</name>
    <dbReference type="NCBI Taxonomy" id="6239"/>
    <lineage>
        <taxon>Eukaryota</taxon>
        <taxon>Metazoa</taxon>
        <taxon>Ecdysozoa</taxon>
        <taxon>Nematoda</taxon>
        <taxon>Chromadorea</taxon>
        <taxon>Rhabditida</taxon>
        <taxon>Rhabditina</taxon>
        <taxon>Rhabditomorpha</taxon>
        <taxon>Rhabditoidea</taxon>
        <taxon>Rhabditidae</taxon>
        <taxon>Peloderinae</taxon>
        <taxon>Caenorhabditis</taxon>
    </lineage>
</organism>